<dbReference type="EMBL" id="AJ010975">
    <property type="protein sequence ID" value="CAB40357.1"/>
    <property type="status" value="ALT_INIT"/>
    <property type="molecule type" value="mRNA"/>
</dbReference>
<dbReference type="EMBL" id="AF090827">
    <property type="protein sequence ID" value="AAD55814.1"/>
    <property type="status" value="ALT_INIT"/>
    <property type="molecule type" value="mRNA"/>
</dbReference>
<dbReference type="EMBL" id="AB195645">
    <property type="protein sequence ID" value="BAE48428.1"/>
    <property type="status" value="ALT_FRAME"/>
    <property type="molecule type" value="Genomic_DNA"/>
</dbReference>
<dbReference type="SMR" id="Q9XG57"/>
<dbReference type="GO" id="GO:0000786">
    <property type="term" value="C:nucleosome"/>
    <property type="evidence" value="ECO:0007669"/>
    <property type="project" value="UniProtKB-KW"/>
</dbReference>
<dbReference type="GO" id="GO:0005634">
    <property type="term" value="C:nucleus"/>
    <property type="evidence" value="ECO:0007669"/>
    <property type="project" value="UniProtKB-SubCell"/>
</dbReference>
<dbReference type="GO" id="GO:0003677">
    <property type="term" value="F:DNA binding"/>
    <property type="evidence" value="ECO:0007669"/>
    <property type="project" value="UniProtKB-KW"/>
</dbReference>
<dbReference type="GO" id="GO:0046982">
    <property type="term" value="F:protein heterodimerization activity"/>
    <property type="evidence" value="ECO:0007669"/>
    <property type="project" value="InterPro"/>
</dbReference>
<dbReference type="GO" id="GO:0030527">
    <property type="term" value="F:structural constituent of chromatin"/>
    <property type="evidence" value="ECO:0007669"/>
    <property type="project" value="InterPro"/>
</dbReference>
<dbReference type="Gene3D" id="1.10.20.10">
    <property type="entry name" value="Histone, subunit A"/>
    <property type="match status" value="1"/>
</dbReference>
<dbReference type="InterPro" id="IPR009072">
    <property type="entry name" value="Histone-fold"/>
</dbReference>
<dbReference type="InterPro" id="IPR000164">
    <property type="entry name" value="Histone_H3/CENP-A"/>
</dbReference>
<dbReference type="PANTHER" id="PTHR11426">
    <property type="entry name" value="HISTONE H3"/>
    <property type="match status" value="1"/>
</dbReference>
<dbReference type="PRINTS" id="PR00622">
    <property type="entry name" value="HISTONEH3"/>
</dbReference>
<dbReference type="SUPFAM" id="SSF47113">
    <property type="entry name" value="Histone-fold"/>
    <property type="match status" value="1"/>
</dbReference>
<dbReference type="PROSITE" id="PS00322">
    <property type="entry name" value="HISTONE_H3_1"/>
    <property type="match status" value="1"/>
</dbReference>
<organism>
    <name type="scientific">Lilium longiflorum</name>
    <name type="common">Trumpet lily</name>
    <dbReference type="NCBI Taxonomy" id="4690"/>
    <lineage>
        <taxon>Eukaryota</taxon>
        <taxon>Viridiplantae</taxon>
        <taxon>Streptophyta</taxon>
        <taxon>Embryophyta</taxon>
        <taxon>Tracheophyta</taxon>
        <taxon>Spermatophyta</taxon>
        <taxon>Magnoliopsida</taxon>
        <taxon>Liliopsida</taxon>
        <taxon>Liliales</taxon>
        <taxon>Liliaceae</taxon>
        <taxon>Lilium</taxon>
    </lineage>
</organism>
<reference key="1">
    <citation type="journal article" date="1999" name="Plant Mol. Biol.">
        <title>Male gametic cell-specific expression of H2A and H3 histone genes.</title>
        <authorList>
            <person name="Xu H."/>
            <person name="Swoboda I."/>
            <person name="Bhalla P.L."/>
            <person name="Singh M.B."/>
        </authorList>
    </citation>
    <scope>NUCLEOTIDE SEQUENCE [MRNA]</scope>
    <scope>TISSUE SPECIFICITY</scope>
    <scope>DEVELOPMENTAL STAGE</scope>
</reference>
<reference key="2">
    <citation type="journal article" date="2006" name="Plant Mol. Biol.">
        <title>Histone H3 variants in male gametic cells of lily and H3 methylation in mature pollen.</title>
        <authorList>
            <person name="Okada T."/>
            <person name="Singh M.B."/>
            <person name="Bhalla P.L."/>
        </authorList>
    </citation>
    <scope>NUCLEOTIDE SEQUENCE [GENOMIC DNA] OF 1-84</scope>
    <scope>DEVELOPMENTAL STAGE</scope>
    <scope>TISSUE SPECIFICITY</scope>
    <source>
        <strain>cv. White Fox</strain>
    </source>
</reference>
<name>H3L2_LILLO</name>
<comment type="function">
    <text>Core component of nucleosome. Nucleosomes wrap and compact DNA into chromatin, limiting DNA accessibility to the cellular machineries which require DNA as a template. Histones thereby play a central role in transcription regulation, DNA repair, DNA replication and chromosomal stability. DNA accessibility is regulated via a complex set of post-translational modifications of histones, also called histone code, and nucleosome remodeling.</text>
</comment>
<comment type="subunit">
    <text>The nucleosome is a histone octamer containing two molecules each of H2A, H2B, H3 and H4 assembled in one H3-H4 heterotetramer and two H2A-H2B heterodimers. The octamer wraps approximately 147 bp of DNA.</text>
</comment>
<comment type="subcellular location">
    <subcellularLocation>
        <location>Nucleus</location>
    </subcellularLocation>
    <subcellularLocation>
        <location>Chromosome</location>
    </subcellularLocation>
</comment>
<comment type="tissue specificity">
    <text evidence="3 4">Pollen specific.</text>
</comment>
<comment type="developmental stage">
    <text evidence="3 4">Detected only in the generative cell of late bicellular pollen and not in early bicellular pollen. Also expressed in uninucleate microspores.</text>
</comment>
<comment type="similarity">
    <text evidence="5">Belongs to the histone H3 family.</text>
</comment>
<comment type="sequence caution" evidence="5">
    <conflict type="erroneous initiation">
        <sequence resource="EMBL-CDS" id="AAD55814"/>
    </conflict>
</comment>
<comment type="sequence caution" evidence="5">
    <conflict type="frameshift">
        <sequence resource="EMBL-CDS" id="BAE48428"/>
    </conflict>
</comment>
<comment type="sequence caution" evidence="5">
    <conflict type="erroneous initiation">
        <sequence resource="EMBL-CDS" id="CAB40357"/>
    </conflict>
</comment>
<evidence type="ECO:0000250" key="1"/>
<evidence type="ECO:0000256" key="2">
    <source>
        <dbReference type="SAM" id="MobiDB-lite"/>
    </source>
</evidence>
<evidence type="ECO:0000269" key="3">
    <source>
    </source>
</evidence>
<evidence type="ECO:0000269" key="4">
    <source>
    </source>
</evidence>
<evidence type="ECO:0000305" key="5"/>
<proteinExistence type="evidence at transcript level"/>
<sequence>MARMKHTARMSTGGKAPRKQLASKALRKAPPPPTKGVKQPTTTTSGKWRFARFHRKLPFQGLVRKIWQDLKTHLRFKNHSVPPLEEVTEVYPCQTIGGCY</sequence>
<keyword id="KW-0158">Chromosome</keyword>
<keyword id="KW-0238">DNA-binding</keyword>
<keyword id="KW-0544">Nucleosome core</keyword>
<keyword id="KW-0539">Nucleus</keyword>
<feature type="initiator methionine" description="Removed" evidence="1">
    <location>
        <position position="1"/>
    </location>
</feature>
<feature type="chain" id="PRO_0000263049" description="Histone H3-like 2">
    <location>
        <begin position="2"/>
        <end position="100"/>
    </location>
</feature>
<feature type="region of interest" description="Disordered" evidence="2">
    <location>
        <begin position="1"/>
        <end position="46"/>
    </location>
</feature>
<feature type="sequence conflict" description="In Ref. 2." evidence="5" ref="2">
    <original>G</original>
    <variation>R</variation>
    <location>
        <position position="61"/>
    </location>
</feature>
<feature type="sequence conflict" description="In Ref. 2." evidence="5" ref="2">
    <original>Q</original>
    <variation>R</variation>
    <location>
        <position position="68"/>
    </location>
</feature>
<feature type="sequence conflict" description="In Ref. 2." evidence="5" ref="2">
    <original>RFK</original>
    <variation>GFQ</variation>
    <location>
        <begin position="75"/>
        <end position="77"/>
    </location>
</feature>
<protein>
    <recommendedName>
        <fullName>Histone H3-like 2</fullName>
    </recommendedName>
    <alternativeName>
        <fullName>Generative cell-specific histone H3</fullName>
    </alternativeName>
    <alternativeName>
        <fullName>Histone gcH3</fullName>
    </alternativeName>
</protein>
<accession>Q9XG57</accession>
<accession>Q2Z2F9</accession>
<gene>
    <name type="primary">gcH3</name>
</gene>